<protein>
    <recommendedName>
        <fullName evidence="1">Error-prone DNA polymerase</fullName>
        <ecNumber evidence="1">2.7.7.7</ecNumber>
    </recommendedName>
</protein>
<name>DNAE2_BURMA</name>
<reference key="1">
    <citation type="journal article" date="2004" name="Proc. Natl. Acad. Sci. U.S.A.">
        <title>Structural flexibility in the Burkholderia mallei genome.</title>
        <authorList>
            <person name="Nierman W.C."/>
            <person name="DeShazer D."/>
            <person name="Kim H.S."/>
            <person name="Tettelin H."/>
            <person name="Nelson K.E."/>
            <person name="Feldblyum T.V."/>
            <person name="Ulrich R.L."/>
            <person name="Ronning C.M."/>
            <person name="Brinkac L.M."/>
            <person name="Daugherty S.C."/>
            <person name="Davidsen T.D."/>
            <person name="DeBoy R.T."/>
            <person name="Dimitrov G."/>
            <person name="Dodson R.J."/>
            <person name="Durkin A.S."/>
            <person name="Gwinn M.L."/>
            <person name="Haft D.H."/>
            <person name="Khouri H.M."/>
            <person name="Kolonay J.F."/>
            <person name="Madupu R."/>
            <person name="Mohammoud Y."/>
            <person name="Nelson W.C."/>
            <person name="Radune D."/>
            <person name="Romero C.M."/>
            <person name="Sarria S."/>
            <person name="Selengut J."/>
            <person name="Shamblin C."/>
            <person name="Sullivan S.A."/>
            <person name="White O."/>
            <person name="Yu Y."/>
            <person name="Zafar N."/>
            <person name="Zhou L."/>
            <person name="Fraser C.M."/>
        </authorList>
    </citation>
    <scope>NUCLEOTIDE SEQUENCE [LARGE SCALE GENOMIC DNA]</scope>
    <source>
        <strain>ATCC 23344</strain>
    </source>
</reference>
<gene>
    <name evidence="1" type="primary">dnaE2</name>
    <name type="ordered locus">BMA3145</name>
</gene>
<dbReference type="EC" id="2.7.7.7" evidence="1"/>
<dbReference type="EMBL" id="CP000010">
    <property type="protein sequence ID" value="AAU48350.1"/>
    <property type="molecule type" value="Genomic_DNA"/>
</dbReference>
<dbReference type="RefSeq" id="WP_004195295.1">
    <property type="nucleotide sequence ID" value="NC_006348.1"/>
</dbReference>
<dbReference type="RefSeq" id="YP_104628.1">
    <property type="nucleotide sequence ID" value="NC_006348.1"/>
</dbReference>
<dbReference type="SMR" id="Q62F99"/>
<dbReference type="KEGG" id="bma:BMA3145"/>
<dbReference type="PATRIC" id="fig|243160.12.peg.3223"/>
<dbReference type="eggNOG" id="COG0587">
    <property type="taxonomic scope" value="Bacteria"/>
</dbReference>
<dbReference type="HOGENOM" id="CLU_001600_4_0_4"/>
<dbReference type="Proteomes" id="UP000006693">
    <property type="component" value="Chromosome 1"/>
</dbReference>
<dbReference type="GO" id="GO:0005737">
    <property type="term" value="C:cytoplasm"/>
    <property type="evidence" value="ECO:0007669"/>
    <property type="project" value="UniProtKB-SubCell"/>
</dbReference>
<dbReference type="GO" id="GO:0008408">
    <property type="term" value="F:3'-5' exonuclease activity"/>
    <property type="evidence" value="ECO:0007669"/>
    <property type="project" value="InterPro"/>
</dbReference>
<dbReference type="GO" id="GO:0003887">
    <property type="term" value="F:DNA-directed DNA polymerase activity"/>
    <property type="evidence" value="ECO:0007669"/>
    <property type="project" value="UniProtKB-UniRule"/>
</dbReference>
<dbReference type="GO" id="GO:0006281">
    <property type="term" value="P:DNA repair"/>
    <property type="evidence" value="ECO:0007669"/>
    <property type="project" value="UniProtKB-UniRule"/>
</dbReference>
<dbReference type="GO" id="GO:0006260">
    <property type="term" value="P:DNA replication"/>
    <property type="evidence" value="ECO:0007669"/>
    <property type="project" value="UniProtKB-KW"/>
</dbReference>
<dbReference type="CDD" id="cd04485">
    <property type="entry name" value="DnaE_OBF"/>
    <property type="match status" value="1"/>
</dbReference>
<dbReference type="CDD" id="cd07434">
    <property type="entry name" value="PHP_PolIIIA_DnaE2"/>
    <property type="match status" value="1"/>
</dbReference>
<dbReference type="Gene3D" id="1.10.150.870">
    <property type="match status" value="1"/>
</dbReference>
<dbReference type="Gene3D" id="3.20.20.140">
    <property type="entry name" value="Metal-dependent hydrolases"/>
    <property type="match status" value="1"/>
</dbReference>
<dbReference type="HAMAP" id="MF_01902">
    <property type="entry name" value="DNApol_error_prone"/>
    <property type="match status" value="1"/>
</dbReference>
<dbReference type="InterPro" id="IPR011708">
    <property type="entry name" value="DNA_pol3_alpha_NTPase_dom"/>
</dbReference>
<dbReference type="InterPro" id="IPR040982">
    <property type="entry name" value="DNA_pol3_finger"/>
</dbReference>
<dbReference type="InterPro" id="IPR023073">
    <property type="entry name" value="DnaE2"/>
</dbReference>
<dbReference type="InterPro" id="IPR004805">
    <property type="entry name" value="DnaE2/DnaE/PolC"/>
</dbReference>
<dbReference type="InterPro" id="IPR029460">
    <property type="entry name" value="DNAPol_HHH"/>
</dbReference>
<dbReference type="InterPro" id="IPR004013">
    <property type="entry name" value="PHP_dom"/>
</dbReference>
<dbReference type="InterPro" id="IPR003141">
    <property type="entry name" value="Pol/His_phosphatase_N"/>
</dbReference>
<dbReference type="InterPro" id="IPR016195">
    <property type="entry name" value="Pol/histidinol_Pase-like"/>
</dbReference>
<dbReference type="NCBIfam" id="TIGR00594">
    <property type="entry name" value="polc"/>
    <property type="match status" value="1"/>
</dbReference>
<dbReference type="NCBIfam" id="NF004225">
    <property type="entry name" value="PRK05672.1"/>
    <property type="match status" value="1"/>
</dbReference>
<dbReference type="PANTHER" id="PTHR32294">
    <property type="entry name" value="DNA POLYMERASE III SUBUNIT ALPHA"/>
    <property type="match status" value="1"/>
</dbReference>
<dbReference type="PANTHER" id="PTHR32294:SF4">
    <property type="entry name" value="ERROR-PRONE DNA POLYMERASE"/>
    <property type="match status" value="1"/>
</dbReference>
<dbReference type="Pfam" id="PF07733">
    <property type="entry name" value="DNA_pol3_alpha"/>
    <property type="match status" value="1"/>
</dbReference>
<dbReference type="Pfam" id="PF17657">
    <property type="entry name" value="DNA_pol3_finger"/>
    <property type="match status" value="1"/>
</dbReference>
<dbReference type="Pfam" id="PF14579">
    <property type="entry name" value="HHH_6"/>
    <property type="match status" value="1"/>
</dbReference>
<dbReference type="Pfam" id="PF02811">
    <property type="entry name" value="PHP"/>
    <property type="match status" value="1"/>
</dbReference>
<dbReference type="SMART" id="SM00481">
    <property type="entry name" value="POLIIIAc"/>
    <property type="match status" value="1"/>
</dbReference>
<dbReference type="SUPFAM" id="SSF89550">
    <property type="entry name" value="PHP domain-like"/>
    <property type="match status" value="1"/>
</dbReference>
<sequence>MDAASGILPDYAELFCRSNFSFLHGASSAEELVERAAKQGYRGIAITDECSLAGAPRMHVAAKAVGLPLVVGAYFGVTPDDAAPGHDPGPGAFGLVLLAQNREGYGNLSELISWRRMNAPKGTYRLTPRMLAAPPRALAHLRGVPDCFAILVPTYPARADVLDAQLAWFDALFGERARLGLVQLQRALDGAHREQVRAAGERRGMHIVALGDVTMHIRSCKPLQDTMTAIRLGMPIAECGHALAPNGEQHLRTRQRIAQLFPADALAQTCRMLDACHFSLDDLRYEYPHEIVPAGHTPTSYLAQETWAGARRRYPDGVPDTVRQRIEFELALIADLKYEPYFLTVYDIVKYARSKDILCQGRGSAANSVVCYCLGVTEVNPQQSTLLFERFLSRERGEPPDIDVDFEHQRREEVIQYLYEKYGHDRAALAAAVSTYRPRGALRETGKALGVDPMLVERVAKEHRWFDGSRDLLARFASVGLDPEVPLIRTWAEIAARLLNFPRHLSQHSGGFVVSRGKLTRLVPVENAAMEGRRVIQWDKDDLEALGLMKVDVLALGMLSALHRAFDMITAWRGPPLPDGRPFRLEHIPQDDEATYDMICRADTVGVFQIESRAQMSMLPRLRPRGYYDLVVQVSIVRPGPIQGGAVHPYLERRRIAAGEAHGEITYPSEALERVLERTLGIPIFQEQVMQIAIVAAGFTPGEADALRRAMAAWKRKGDLGKYHERIVAGMLERGYSREFAEQIFEQIKGFGEYGFPESHAASFAKLAYASSWLKRHEPAIFLAALLNSQPMGFYPPAQLVQDAKRHGVTVLPIDATKSGWEASLEAQPGAAPPDGRPAVRLGLSLVRGLGEEAARRIGAARAAGPFASVDELARRACLERRDLEALAAANAFATLAGNRRDALWQAVAAAPIDEAVRPALGAPTEADDVFADYRTIGLTLNRHPVALLRPALDARRLSSAAALRDRRNGRLARACGLVTARQMPGTAKGVLFVTLEDETGCVNVIVRPELLERQRRETLDSQLLAVSGVWQCESDVRHLVAQYLEDLTPLIAGLRTESREFH</sequence>
<organism>
    <name type="scientific">Burkholderia mallei (strain ATCC 23344)</name>
    <dbReference type="NCBI Taxonomy" id="243160"/>
    <lineage>
        <taxon>Bacteria</taxon>
        <taxon>Pseudomonadati</taxon>
        <taxon>Pseudomonadota</taxon>
        <taxon>Betaproteobacteria</taxon>
        <taxon>Burkholderiales</taxon>
        <taxon>Burkholderiaceae</taxon>
        <taxon>Burkholderia</taxon>
        <taxon>pseudomallei group</taxon>
    </lineage>
</organism>
<keyword id="KW-0963">Cytoplasm</keyword>
<keyword id="KW-0227">DNA damage</keyword>
<keyword id="KW-0234">DNA repair</keyword>
<keyword id="KW-0235">DNA replication</keyword>
<keyword id="KW-0239">DNA-directed DNA polymerase</keyword>
<keyword id="KW-0548">Nucleotidyltransferase</keyword>
<keyword id="KW-1185">Reference proteome</keyword>
<keyword id="KW-0808">Transferase</keyword>
<comment type="function">
    <text evidence="1">DNA polymerase involved in damage-induced mutagenesis and translesion synthesis (TLS). It is not the major replicative DNA polymerase.</text>
</comment>
<comment type="catalytic activity">
    <reaction evidence="1">
        <text>DNA(n) + a 2'-deoxyribonucleoside 5'-triphosphate = DNA(n+1) + diphosphate</text>
        <dbReference type="Rhea" id="RHEA:22508"/>
        <dbReference type="Rhea" id="RHEA-COMP:17339"/>
        <dbReference type="Rhea" id="RHEA-COMP:17340"/>
        <dbReference type="ChEBI" id="CHEBI:33019"/>
        <dbReference type="ChEBI" id="CHEBI:61560"/>
        <dbReference type="ChEBI" id="CHEBI:173112"/>
        <dbReference type="EC" id="2.7.7.7"/>
    </reaction>
</comment>
<comment type="subcellular location">
    <subcellularLocation>
        <location evidence="1">Cytoplasm</location>
    </subcellularLocation>
</comment>
<comment type="similarity">
    <text evidence="1">Belongs to the DNA polymerase type-C family. DnaE2 subfamily.</text>
</comment>
<evidence type="ECO:0000255" key="1">
    <source>
        <dbReference type="HAMAP-Rule" id="MF_01902"/>
    </source>
</evidence>
<feature type="chain" id="PRO_0000103373" description="Error-prone DNA polymerase">
    <location>
        <begin position="1"/>
        <end position="1063"/>
    </location>
</feature>
<accession>Q62F99</accession>
<proteinExistence type="inferred from homology"/>